<accession>P30193</accession>
<geneLocation type="plasmid">
    <name>pTu 32</name>
</geneLocation>
<gene>
    <name type="primary">epiY'</name>
</gene>
<comment type="subcellular location">
    <subcellularLocation>
        <location evidence="2">Cell membrane</location>
        <topology evidence="1">Multi-pass membrane protein</topology>
    </subcellularLocation>
</comment>
<keyword id="KW-1003">Cell membrane</keyword>
<keyword id="KW-0472">Membrane</keyword>
<keyword id="KW-0614">Plasmid</keyword>
<keyword id="KW-0812">Transmembrane</keyword>
<keyword id="KW-1133">Transmembrane helix</keyword>
<evidence type="ECO:0000255" key="1">
    <source>
        <dbReference type="PROSITE-ProRule" id="PRU00441"/>
    </source>
</evidence>
<evidence type="ECO:0000305" key="2"/>
<reference key="1">
    <citation type="journal article" date="1992" name="Eur. J. Biochem.">
        <title>Analysis of genes involved in the biosynthesis of lantibiotic epidermin.</title>
        <authorList>
            <person name="Schnell N."/>
            <person name="Engelke G."/>
            <person name="Augustin J."/>
            <person name="Rosenstein R."/>
            <person name="Ungermann V."/>
            <person name="Goetz F."/>
            <person name="Entian K.-D."/>
        </authorList>
    </citation>
    <scope>NUCLEOTIDE SEQUENCE [GENOMIC DNA]</scope>
    <source>
        <strain>TU 3298 / DSM 3095</strain>
    </source>
</reference>
<feature type="chain" id="PRO_0000086991" description="Uncharacterized protein in epiA 5'region">
    <location>
        <begin position="1"/>
        <end position="275" status="greater than"/>
    </location>
</feature>
<feature type="transmembrane region" description="Helical" evidence="1">
    <location>
        <begin position="21"/>
        <end position="41"/>
    </location>
</feature>
<feature type="transmembrane region" description="Helical" evidence="1">
    <location>
        <begin position="106"/>
        <end position="126"/>
    </location>
</feature>
<feature type="transmembrane region" description="Helical" evidence="1">
    <location>
        <begin position="137"/>
        <end position="157"/>
    </location>
</feature>
<feature type="domain" description="ABC transmembrane type-1" evidence="1">
    <location>
        <begin position="1"/>
        <end position="162"/>
    </location>
</feature>
<feature type="non-terminal residue">
    <location>
        <position position="275"/>
    </location>
</feature>
<proteinExistence type="inferred from homology"/>
<dbReference type="EMBL" id="X62386">
    <property type="protein sequence ID" value="CAA44250.1"/>
    <property type="molecule type" value="Genomic_DNA"/>
</dbReference>
<dbReference type="PIR" id="S23413">
    <property type="entry name" value="S23413"/>
</dbReference>
<dbReference type="SMR" id="P30193"/>
<dbReference type="GO" id="GO:0005886">
    <property type="term" value="C:plasma membrane"/>
    <property type="evidence" value="ECO:0007669"/>
    <property type="project" value="UniProtKB-SubCell"/>
</dbReference>
<dbReference type="GO" id="GO:0015421">
    <property type="term" value="F:ABC-type oligopeptide transporter activity"/>
    <property type="evidence" value="ECO:0007669"/>
    <property type="project" value="TreeGrafter"/>
</dbReference>
<dbReference type="GO" id="GO:0005524">
    <property type="term" value="F:ATP binding"/>
    <property type="evidence" value="ECO:0007669"/>
    <property type="project" value="InterPro"/>
</dbReference>
<dbReference type="GO" id="GO:0016887">
    <property type="term" value="F:ATP hydrolysis activity"/>
    <property type="evidence" value="ECO:0007669"/>
    <property type="project" value="InterPro"/>
</dbReference>
<dbReference type="Gene3D" id="1.20.1560.10">
    <property type="entry name" value="ABC transporter type 1, transmembrane domain"/>
    <property type="match status" value="1"/>
</dbReference>
<dbReference type="Gene3D" id="3.40.50.300">
    <property type="entry name" value="P-loop containing nucleotide triphosphate hydrolases"/>
    <property type="match status" value="1"/>
</dbReference>
<dbReference type="InterPro" id="IPR011527">
    <property type="entry name" value="ABC1_TM_dom"/>
</dbReference>
<dbReference type="InterPro" id="IPR036640">
    <property type="entry name" value="ABC1_TM_sf"/>
</dbReference>
<dbReference type="InterPro" id="IPR003439">
    <property type="entry name" value="ABC_transporter-like_ATP-bd"/>
</dbReference>
<dbReference type="InterPro" id="IPR027417">
    <property type="entry name" value="P-loop_NTPase"/>
</dbReference>
<dbReference type="InterPro" id="IPR039421">
    <property type="entry name" value="Type_1_exporter"/>
</dbReference>
<dbReference type="PANTHER" id="PTHR43394:SF1">
    <property type="entry name" value="ATP-BINDING CASSETTE SUB-FAMILY B MEMBER 10, MITOCHONDRIAL"/>
    <property type="match status" value="1"/>
</dbReference>
<dbReference type="PANTHER" id="PTHR43394">
    <property type="entry name" value="ATP-DEPENDENT PERMEASE MDL1, MITOCHONDRIAL"/>
    <property type="match status" value="1"/>
</dbReference>
<dbReference type="Pfam" id="PF00664">
    <property type="entry name" value="ABC_membrane"/>
    <property type="match status" value="1"/>
</dbReference>
<dbReference type="Pfam" id="PF00005">
    <property type="entry name" value="ABC_tran"/>
    <property type="match status" value="1"/>
</dbReference>
<dbReference type="SUPFAM" id="SSF90123">
    <property type="entry name" value="ABC transporter transmembrane region"/>
    <property type="match status" value="1"/>
</dbReference>
<dbReference type="SUPFAM" id="SSF52540">
    <property type="entry name" value="P-loop containing nucleoside triphosphate hydrolases"/>
    <property type="match status" value="1"/>
</dbReference>
<dbReference type="PROSITE" id="PS50929">
    <property type="entry name" value="ABC_TM1F"/>
    <property type="match status" value="1"/>
</dbReference>
<name>EPIZ_STAEP</name>
<organism>
    <name type="scientific">Staphylococcus epidermidis</name>
    <dbReference type="NCBI Taxonomy" id="1282"/>
    <lineage>
        <taxon>Bacteria</taxon>
        <taxon>Bacillati</taxon>
        <taxon>Bacillota</taxon>
        <taxon>Bacilli</taxon>
        <taxon>Bacillales</taxon>
        <taxon>Staphylococcaceae</taxon>
        <taxon>Staphylococcus</taxon>
    </lineage>
</organism>
<protein>
    <recommendedName>
        <fullName>Uncharacterized protein in epiA 5'region</fullName>
    </recommendedName>
</protein>
<sequence>NLFSVIVSLIFLYIINKTLTLYLVCTLPILIIVILPIGNIMKRVSSKSQEATAKLSSYYSNRLSTIKLIKTLSTYNIEKIKNYTLLKNIFDIELHKIKVLSFFEPIMNLILFINIFGILFLGYYLMENNMMKSGDMFAYVLYLFQIINPIVSITSYWTEVQRAIGSSDRILKINKEPEEVLTIKTTYNNFVQKMEINDLNFTKDNKQIINSISLDLHKGYIYNIIGESGCGKSTLLNILAGLNTEYTGNIYLDKLDKSQFSKYEWRNLFSYITQD</sequence>